<sequence>MGENQETQKSFLETVKFDSNGLVPAIVQDHETGKVLMMAWMNLESLKMTLEKKKACYWSRSRNKLWLKGESSGNMQEVHDILIDCDGDTLLLKVSQKGGACHVGYHSCFYRRTVDGESMEICDTLMFDPEEVYGKQS</sequence>
<comment type="function">
    <text evidence="1">Catalyzes the hydrolysis of the adenine ring of phosphoribosyl-AMP.</text>
</comment>
<comment type="catalytic activity">
    <reaction evidence="1">
        <text>1-(5-phospho-beta-D-ribosyl)-5'-AMP + H2O = 1-(5-phospho-beta-D-ribosyl)-5-[(5-phospho-beta-D-ribosylamino)methylideneamino]imidazole-4-carboxamide</text>
        <dbReference type="Rhea" id="RHEA:20049"/>
        <dbReference type="ChEBI" id="CHEBI:15377"/>
        <dbReference type="ChEBI" id="CHEBI:58435"/>
        <dbReference type="ChEBI" id="CHEBI:59457"/>
        <dbReference type="EC" id="3.5.4.19"/>
    </reaction>
</comment>
<comment type="cofactor">
    <cofactor evidence="1">
        <name>Mg(2+)</name>
        <dbReference type="ChEBI" id="CHEBI:18420"/>
    </cofactor>
    <text evidence="1">Binds 1 Mg(2+) ion per subunit.</text>
</comment>
<comment type="cofactor">
    <cofactor evidence="1">
        <name>Zn(2+)</name>
        <dbReference type="ChEBI" id="CHEBI:29105"/>
    </cofactor>
    <text evidence="1">Binds 1 zinc ion per subunit.</text>
</comment>
<comment type="pathway">
    <text evidence="1">Amino-acid biosynthesis; L-histidine biosynthesis; L-histidine from 5-phospho-alpha-D-ribose 1-diphosphate: step 3/9.</text>
</comment>
<comment type="subunit">
    <text evidence="1">Homodimer.</text>
</comment>
<comment type="subcellular location">
    <subcellularLocation>
        <location evidence="1">Cytoplasm</location>
    </subcellularLocation>
</comment>
<comment type="similarity">
    <text evidence="1">Belongs to the PRA-CH family.</text>
</comment>
<feature type="chain" id="PRO_0000136470" description="Phosphoribosyl-AMP cyclohydrolase">
    <location>
        <begin position="1"/>
        <end position="137"/>
    </location>
</feature>
<feature type="binding site" evidence="1">
    <location>
        <position position="84"/>
    </location>
    <ligand>
        <name>Mg(2+)</name>
        <dbReference type="ChEBI" id="CHEBI:18420"/>
    </ligand>
</feature>
<feature type="binding site" evidence="1">
    <location>
        <position position="85"/>
    </location>
    <ligand>
        <name>Zn(2+)</name>
        <dbReference type="ChEBI" id="CHEBI:29105"/>
        <note>ligand shared between dimeric partners</note>
    </ligand>
</feature>
<feature type="binding site" evidence="1">
    <location>
        <position position="86"/>
    </location>
    <ligand>
        <name>Mg(2+)</name>
        <dbReference type="ChEBI" id="CHEBI:18420"/>
    </ligand>
</feature>
<feature type="binding site" evidence="1">
    <location>
        <position position="88"/>
    </location>
    <ligand>
        <name>Mg(2+)</name>
        <dbReference type="ChEBI" id="CHEBI:18420"/>
    </ligand>
</feature>
<feature type="binding site" evidence="1">
    <location>
        <position position="101"/>
    </location>
    <ligand>
        <name>Zn(2+)</name>
        <dbReference type="ChEBI" id="CHEBI:29105"/>
        <note>ligand shared between dimeric partners</note>
    </ligand>
</feature>
<feature type="binding site" evidence="1">
    <location>
        <position position="108"/>
    </location>
    <ligand>
        <name>Zn(2+)</name>
        <dbReference type="ChEBI" id="CHEBI:29105"/>
        <note>ligand shared between dimeric partners</note>
    </ligand>
</feature>
<gene>
    <name evidence="1" type="primary">hisI</name>
    <name type="ordered locus">CT0463</name>
</gene>
<reference key="1">
    <citation type="journal article" date="2002" name="Proc. Natl. Acad. Sci. U.S.A.">
        <title>The complete genome sequence of Chlorobium tepidum TLS, a photosynthetic, anaerobic, green-sulfur bacterium.</title>
        <authorList>
            <person name="Eisen J.A."/>
            <person name="Nelson K.E."/>
            <person name="Paulsen I.T."/>
            <person name="Heidelberg J.F."/>
            <person name="Wu M."/>
            <person name="Dodson R.J."/>
            <person name="DeBoy R.T."/>
            <person name="Gwinn M.L."/>
            <person name="Nelson W.C."/>
            <person name="Haft D.H."/>
            <person name="Hickey E.K."/>
            <person name="Peterson J.D."/>
            <person name="Durkin A.S."/>
            <person name="Kolonay J.F."/>
            <person name="Yang F."/>
            <person name="Holt I.E."/>
            <person name="Umayam L.A."/>
            <person name="Mason T.M."/>
            <person name="Brenner M."/>
            <person name="Shea T.P."/>
            <person name="Parksey D.S."/>
            <person name="Nierman W.C."/>
            <person name="Feldblyum T.V."/>
            <person name="Hansen C.L."/>
            <person name="Craven M.B."/>
            <person name="Radune D."/>
            <person name="Vamathevan J.J."/>
            <person name="Khouri H.M."/>
            <person name="White O."/>
            <person name="Gruber T.M."/>
            <person name="Ketchum K.A."/>
            <person name="Venter J.C."/>
            <person name="Tettelin H."/>
            <person name="Bryant D.A."/>
            <person name="Fraser C.M."/>
        </authorList>
    </citation>
    <scope>NUCLEOTIDE SEQUENCE [LARGE SCALE GENOMIC DNA]</scope>
    <source>
        <strain>ATCC 49652 / DSM 12025 / NBRC 103806 / TLS</strain>
    </source>
</reference>
<evidence type="ECO:0000255" key="1">
    <source>
        <dbReference type="HAMAP-Rule" id="MF_01021"/>
    </source>
</evidence>
<proteinExistence type="inferred from homology"/>
<protein>
    <recommendedName>
        <fullName evidence="1">Phosphoribosyl-AMP cyclohydrolase</fullName>
        <shortName evidence="1">PRA-CH</shortName>
        <ecNumber evidence="1">3.5.4.19</ecNumber>
    </recommendedName>
</protein>
<keyword id="KW-0028">Amino-acid biosynthesis</keyword>
<keyword id="KW-0963">Cytoplasm</keyword>
<keyword id="KW-0368">Histidine biosynthesis</keyword>
<keyword id="KW-0378">Hydrolase</keyword>
<keyword id="KW-0460">Magnesium</keyword>
<keyword id="KW-0479">Metal-binding</keyword>
<keyword id="KW-1185">Reference proteome</keyword>
<keyword id="KW-0862">Zinc</keyword>
<accession>Q8KF68</accession>
<organism>
    <name type="scientific">Chlorobaculum tepidum (strain ATCC 49652 / DSM 12025 / NBRC 103806 / TLS)</name>
    <name type="common">Chlorobium tepidum</name>
    <dbReference type="NCBI Taxonomy" id="194439"/>
    <lineage>
        <taxon>Bacteria</taxon>
        <taxon>Pseudomonadati</taxon>
        <taxon>Chlorobiota</taxon>
        <taxon>Chlorobiia</taxon>
        <taxon>Chlorobiales</taxon>
        <taxon>Chlorobiaceae</taxon>
        <taxon>Chlorobaculum</taxon>
    </lineage>
</organism>
<name>HIS3_CHLTE</name>
<dbReference type="EC" id="3.5.4.19" evidence="1"/>
<dbReference type="EMBL" id="AE006470">
    <property type="protein sequence ID" value="AAM71706.1"/>
    <property type="molecule type" value="Genomic_DNA"/>
</dbReference>
<dbReference type="RefSeq" id="NP_661364.1">
    <property type="nucleotide sequence ID" value="NC_002932.3"/>
</dbReference>
<dbReference type="RefSeq" id="WP_010932151.1">
    <property type="nucleotide sequence ID" value="NC_002932.3"/>
</dbReference>
<dbReference type="SMR" id="Q8KF68"/>
<dbReference type="STRING" id="194439.CT0463"/>
<dbReference type="EnsemblBacteria" id="AAM71706">
    <property type="protein sequence ID" value="AAM71706"/>
    <property type="gene ID" value="CT0463"/>
</dbReference>
<dbReference type="KEGG" id="cte:CT0463"/>
<dbReference type="PATRIC" id="fig|194439.7.peg.448"/>
<dbReference type="eggNOG" id="COG0139">
    <property type="taxonomic scope" value="Bacteria"/>
</dbReference>
<dbReference type="HOGENOM" id="CLU_048577_5_0_10"/>
<dbReference type="OrthoDB" id="9795769at2"/>
<dbReference type="UniPathway" id="UPA00031">
    <property type="reaction ID" value="UER00008"/>
</dbReference>
<dbReference type="Proteomes" id="UP000001007">
    <property type="component" value="Chromosome"/>
</dbReference>
<dbReference type="GO" id="GO:0005737">
    <property type="term" value="C:cytoplasm"/>
    <property type="evidence" value="ECO:0007669"/>
    <property type="project" value="UniProtKB-SubCell"/>
</dbReference>
<dbReference type="GO" id="GO:0000287">
    <property type="term" value="F:magnesium ion binding"/>
    <property type="evidence" value="ECO:0007669"/>
    <property type="project" value="UniProtKB-UniRule"/>
</dbReference>
<dbReference type="GO" id="GO:0004635">
    <property type="term" value="F:phosphoribosyl-AMP cyclohydrolase activity"/>
    <property type="evidence" value="ECO:0007669"/>
    <property type="project" value="UniProtKB-UniRule"/>
</dbReference>
<dbReference type="GO" id="GO:0008270">
    <property type="term" value="F:zinc ion binding"/>
    <property type="evidence" value="ECO:0007669"/>
    <property type="project" value="UniProtKB-UniRule"/>
</dbReference>
<dbReference type="GO" id="GO:0000105">
    <property type="term" value="P:L-histidine biosynthetic process"/>
    <property type="evidence" value="ECO:0007669"/>
    <property type="project" value="UniProtKB-UniRule"/>
</dbReference>
<dbReference type="FunFam" id="3.10.20.810:FF:000001">
    <property type="entry name" value="Histidine biosynthesis bifunctional protein HisIE"/>
    <property type="match status" value="1"/>
</dbReference>
<dbReference type="Gene3D" id="3.10.20.810">
    <property type="entry name" value="Phosphoribosyl-AMP cyclohydrolase"/>
    <property type="match status" value="1"/>
</dbReference>
<dbReference type="HAMAP" id="MF_01021">
    <property type="entry name" value="HisI"/>
    <property type="match status" value="1"/>
</dbReference>
<dbReference type="InterPro" id="IPR026660">
    <property type="entry name" value="PRA-CH"/>
</dbReference>
<dbReference type="InterPro" id="IPR002496">
    <property type="entry name" value="PRib_AMP_CycHydrolase_dom"/>
</dbReference>
<dbReference type="InterPro" id="IPR038019">
    <property type="entry name" value="PRib_AMP_CycHydrolase_sf"/>
</dbReference>
<dbReference type="NCBIfam" id="NF000768">
    <property type="entry name" value="PRK00051.1"/>
    <property type="match status" value="1"/>
</dbReference>
<dbReference type="PANTHER" id="PTHR42945">
    <property type="entry name" value="HISTIDINE BIOSYNTHESIS BIFUNCTIONAL PROTEIN"/>
    <property type="match status" value="1"/>
</dbReference>
<dbReference type="PANTHER" id="PTHR42945:SF1">
    <property type="entry name" value="HISTIDINE BIOSYNTHESIS BIFUNCTIONAL PROTEIN HIS7"/>
    <property type="match status" value="1"/>
</dbReference>
<dbReference type="Pfam" id="PF01502">
    <property type="entry name" value="PRA-CH"/>
    <property type="match status" value="1"/>
</dbReference>
<dbReference type="SUPFAM" id="SSF141734">
    <property type="entry name" value="HisI-like"/>
    <property type="match status" value="1"/>
</dbReference>